<protein>
    <recommendedName>
        <fullName evidence="1">UPF0301 protein NTHI0415</fullName>
    </recommendedName>
</protein>
<sequence>MMELQGKFLIAMPHLDDYFNRTVVFMCEHNEQGSMGLVINQPTDLSIAELYSKLNFMMKNDRTFGNEMVVAGGPVHTERGFILHKNTLNAFQHTYKVTKELSMTTSADVVETLGSTFAPEKYLVALGCSSWGAGQLEKEIRDNAWLVVSSNDQILFDMPYEDRYAAANQLLGIHPYNFALAQVGHS</sequence>
<name>Y415_HAEI8</name>
<gene>
    <name type="ordered locus">NTHI0415</name>
</gene>
<proteinExistence type="inferred from homology"/>
<feature type="chain" id="PRO_0000258830" description="UPF0301 protein NTHI0415">
    <location>
        <begin position="1"/>
        <end position="186"/>
    </location>
</feature>
<organism>
    <name type="scientific">Haemophilus influenzae (strain 86-028NP)</name>
    <dbReference type="NCBI Taxonomy" id="281310"/>
    <lineage>
        <taxon>Bacteria</taxon>
        <taxon>Pseudomonadati</taxon>
        <taxon>Pseudomonadota</taxon>
        <taxon>Gammaproteobacteria</taxon>
        <taxon>Pasteurellales</taxon>
        <taxon>Pasteurellaceae</taxon>
        <taxon>Haemophilus</taxon>
    </lineage>
</organism>
<comment type="similarity">
    <text evidence="1">Belongs to the UPF0301 (AlgH) family.</text>
</comment>
<reference key="1">
    <citation type="journal article" date="2005" name="J. Bacteriol.">
        <title>Genomic sequence of an otitis media isolate of nontypeable Haemophilus influenzae: comparative study with H. influenzae serotype d, strain KW20.</title>
        <authorList>
            <person name="Harrison A."/>
            <person name="Dyer D.W."/>
            <person name="Gillaspy A."/>
            <person name="Ray W.C."/>
            <person name="Mungur R."/>
            <person name="Carson M.B."/>
            <person name="Zhong H."/>
            <person name="Gipson J."/>
            <person name="Gipson M."/>
            <person name="Johnson L.S."/>
            <person name="Lewis L."/>
            <person name="Bakaletz L.O."/>
            <person name="Munson R.S. Jr."/>
        </authorList>
    </citation>
    <scope>NUCLEOTIDE SEQUENCE [LARGE SCALE GENOMIC DNA]</scope>
    <source>
        <strain>86-028NP</strain>
    </source>
</reference>
<accession>Q4QNN9</accession>
<dbReference type="EMBL" id="CP000057">
    <property type="protein sequence ID" value="AAX87358.1"/>
    <property type="molecule type" value="Genomic_DNA"/>
</dbReference>
<dbReference type="RefSeq" id="WP_011271977.1">
    <property type="nucleotide sequence ID" value="NC_007146.2"/>
</dbReference>
<dbReference type="SMR" id="Q4QNN9"/>
<dbReference type="KEGG" id="hit:NTHI0415"/>
<dbReference type="HOGENOM" id="CLU_057596_1_0_6"/>
<dbReference type="Proteomes" id="UP000002525">
    <property type="component" value="Chromosome"/>
</dbReference>
<dbReference type="GO" id="GO:0005829">
    <property type="term" value="C:cytosol"/>
    <property type="evidence" value="ECO:0007669"/>
    <property type="project" value="TreeGrafter"/>
</dbReference>
<dbReference type="Gene3D" id="3.40.1740.10">
    <property type="entry name" value="VC0467-like"/>
    <property type="match status" value="1"/>
</dbReference>
<dbReference type="HAMAP" id="MF_00758">
    <property type="entry name" value="UPF0301"/>
    <property type="match status" value="1"/>
</dbReference>
<dbReference type="InterPro" id="IPR003774">
    <property type="entry name" value="AlgH-like"/>
</dbReference>
<dbReference type="NCBIfam" id="NF001266">
    <property type="entry name" value="PRK00228.1-1"/>
    <property type="match status" value="1"/>
</dbReference>
<dbReference type="PANTHER" id="PTHR30327">
    <property type="entry name" value="UNCHARACTERIZED PROTEIN YQGE"/>
    <property type="match status" value="1"/>
</dbReference>
<dbReference type="PANTHER" id="PTHR30327:SF1">
    <property type="entry name" value="UPF0301 PROTEIN YQGE"/>
    <property type="match status" value="1"/>
</dbReference>
<dbReference type="Pfam" id="PF02622">
    <property type="entry name" value="DUF179"/>
    <property type="match status" value="1"/>
</dbReference>
<dbReference type="SUPFAM" id="SSF143456">
    <property type="entry name" value="VC0467-like"/>
    <property type="match status" value="1"/>
</dbReference>
<evidence type="ECO:0000255" key="1">
    <source>
        <dbReference type="HAMAP-Rule" id="MF_00758"/>
    </source>
</evidence>